<organism>
    <name type="scientific">Escherichia coli (strain K12 / MC4100 / BW2952)</name>
    <dbReference type="NCBI Taxonomy" id="595496"/>
    <lineage>
        <taxon>Bacteria</taxon>
        <taxon>Pseudomonadati</taxon>
        <taxon>Pseudomonadota</taxon>
        <taxon>Gammaproteobacteria</taxon>
        <taxon>Enterobacterales</taxon>
        <taxon>Enterobacteriaceae</taxon>
        <taxon>Escherichia</taxon>
    </lineage>
</organism>
<comment type="function">
    <text evidence="1">Conversion of glycerol 3-phosphate to dihydroxyacetone. Uses fumarate or nitrate as electron acceptor.</text>
</comment>
<comment type="catalytic activity">
    <reaction evidence="1">
        <text>a quinone + sn-glycerol 3-phosphate = dihydroxyacetone phosphate + a quinol</text>
        <dbReference type="Rhea" id="RHEA:18977"/>
        <dbReference type="ChEBI" id="CHEBI:24646"/>
        <dbReference type="ChEBI" id="CHEBI:57597"/>
        <dbReference type="ChEBI" id="CHEBI:57642"/>
        <dbReference type="ChEBI" id="CHEBI:132124"/>
        <dbReference type="EC" id="1.1.5.3"/>
    </reaction>
</comment>
<comment type="cofactor">
    <cofactor evidence="1">
        <name>FMN</name>
        <dbReference type="ChEBI" id="CHEBI:58210"/>
    </cofactor>
</comment>
<comment type="pathway">
    <text evidence="1">Polyol metabolism; glycerol degradation via glycerol kinase pathway; glycerone phosphate from sn-glycerol 3-phosphate (anaerobic route): step 1/1.</text>
</comment>
<comment type="subunit">
    <text evidence="1">Composed of a catalytic GlpA/B dimer and of membrane bound GlpC.</text>
</comment>
<comment type="similarity">
    <text evidence="1">Belongs to the anaerobic G-3-P dehydrogenase subunit B family.</text>
</comment>
<accession>C4ZU83</accession>
<dbReference type="EC" id="1.1.5.3" evidence="1"/>
<dbReference type="EMBL" id="CP001396">
    <property type="protein sequence ID" value="ACR65559.1"/>
    <property type="molecule type" value="Genomic_DNA"/>
</dbReference>
<dbReference type="RefSeq" id="WP_001209927.1">
    <property type="nucleotide sequence ID" value="NC_012759.1"/>
</dbReference>
<dbReference type="KEGG" id="ebw:BWG_2014"/>
<dbReference type="HOGENOM" id="CLU_047793_0_0_6"/>
<dbReference type="UniPathway" id="UPA00618">
    <property type="reaction ID" value="UER00673"/>
</dbReference>
<dbReference type="GO" id="GO:0009331">
    <property type="term" value="C:glycerol-3-phosphate dehydrogenase (FAD) complex"/>
    <property type="evidence" value="ECO:0007669"/>
    <property type="project" value="InterPro"/>
</dbReference>
<dbReference type="GO" id="GO:0004368">
    <property type="term" value="F:glycerol-3-phosphate dehydrogenase (quinone) activity"/>
    <property type="evidence" value="ECO:0007669"/>
    <property type="project" value="UniProtKB-UniRule"/>
</dbReference>
<dbReference type="GO" id="GO:0009061">
    <property type="term" value="P:anaerobic respiration"/>
    <property type="evidence" value="ECO:0007669"/>
    <property type="project" value="TreeGrafter"/>
</dbReference>
<dbReference type="GO" id="GO:0019563">
    <property type="term" value="P:glycerol catabolic process"/>
    <property type="evidence" value="ECO:0007669"/>
    <property type="project" value="UniProtKB-UniRule"/>
</dbReference>
<dbReference type="GO" id="GO:0046168">
    <property type="term" value="P:glycerol-3-phosphate catabolic process"/>
    <property type="evidence" value="ECO:0007669"/>
    <property type="project" value="TreeGrafter"/>
</dbReference>
<dbReference type="Gene3D" id="3.50.50.60">
    <property type="entry name" value="FAD/NAD(P)-binding domain"/>
    <property type="match status" value="1"/>
</dbReference>
<dbReference type="HAMAP" id="MF_00753">
    <property type="entry name" value="Glycerol3P_GlpB"/>
    <property type="match status" value="1"/>
</dbReference>
<dbReference type="InterPro" id="IPR003953">
    <property type="entry name" value="FAD-dep_OxRdtase_2_FAD-bd"/>
</dbReference>
<dbReference type="InterPro" id="IPR050315">
    <property type="entry name" value="FAD-oxidoreductase_2"/>
</dbReference>
<dbReference type="InterPro" id="IPR036188">
    <property type="entry name" value="FAD/NAD-bd_sf"/>
</dbReference>
<dbReference type="InterPro" id="IPR009158">
    <property type="entry name" value="G3P_DH_GlpB_su"/>
</dbReference>
<dbReference type="NCBIfam" id="TIGR03378">
    <property type="entry name" value="glycerol3P_GlpB"/>
    <property type="match status" value="1"/>
</dbReference>
<dbReference type="NCBIfam" id="NF003718">
    <property type="entry name" value="PRK05329.1-1"/>
    <property type="match status" value="1"/>
</dbReference>
<dbReference type="NCBIfam" id="NF003719">
    <property type="entry name" value="PRK05329.1-2"/>
    <property type="match status" value="1"/>
</dbReference>
<dbReference type="NCBIfam" id="NF003720">
    <property type="entry name" value="PRK05329.1-3"/>
    <property type="match status" value="1"/>
</dbReference>
<dbReference type="PANTHER" id="PTHR43400:SF11">
    <property type="entry name" value="ANAEROBIC GLYCEROL-3-PHOSPHATE DEHYDROGENASE SUBUNIT B"/>
    <property type="match status" value="1"/>
</dbReference>
<dbReference type="PANTHER" id="PTHR43400">
    <property type="entry name" value="FUMARATE REDUCTASE"/>
    <property type="match status" value="1"/>
</dbReference>
<dbReference type="Pfam" id="PF00890">
    <property type="entry name" value="FAD_binding_2"/>
    <property type="match status" value="1"/>
</dbReference>
<dbReference type="PIRSF" id="PIRSF000141">
    <property type="entry name" value="Anaerobic_G3P_dh"/>
    <property type="match status" value="1"/>
</dbReference>
<dbReference type="SUPFAM" id="SSF51905">
    <property type="entry name" value="FAD/NAD(P)-binding domain"/>
    <property type="match status" value="1"/>
</dbReference>
<sequence>MRFDTVIMGGGLAGLLCGLQLQKHGLRCAIVTRGQSALHFSSGSLDLLSHLPDGQPVTDIHSGLESLRQQAPAHPYSLLEPQRVLDLACQAQALIAESGAQLQGSVELAHQRVTPLGTLRSTWLSSPEVPVWPLPAKKICVVGISGLMDFQAHLAAASLRELGLAVETAEIELPELDVLRNNATEFRAVNIARFLDNEENWPLLLDALIPVANTCEMILMPACFGLADDKLWRWLNEKLPCSLMLLPTLPPSVLGIRLQNQLQRQFVRQGGVWMPGDEVKKVTCKNGVVNEIWTRNHADIPLRPRFAVLASGSFFSGGLVAERNGIREPILGLDVLQTATRGEWYKGDFFAPQPWQQFGVTTDETLRPSQAGQTIENLFAIGSVLGGFDPIAQGCGGGVCAVSALHAAQQIAQRAGGQQ</sequence>
<gene>
    <name evidence="1" type="primary">glpB</name>
    <name type="ordered locus">BWG_2014</name>
</gene>
<keyword id="KW-0285">Flavoprotein</keyword>
<keyword id="KW-0288">FMN</keyword>
<keyword id="KW-0560">Oxidoreductase</keyword>
<protein>
    <recommendedName>
        <fullName evidence="1">Anaerobic glycerol-3-phosphate dehydrogenase subunit B</fullName>
        <shortName evidence="1">Anaerobic G-3-P dehydrogenase subunit B</shortName>
        <shortName evidence="1">Anaerobic G3Pdhase B</shortName>
        <ecNumber evidence="1">1.1.5.3</ecNumber>
    </recommendedName>
</protein>
<evidence type="ECO:0000255" key="1">
    <source>
        <dbReference type="HAMAP-Rule" id="MF_00753"/>
    </source>
</evidence>
<proteinExistence type="inferred from homology"/>
<reference key="1">
    <citation type="journal article" date="2009" name="J. Bacteriol.">
        <title>Genomic sequencing reveals regulatory mutations and recombinational events in the widely used MC4100 lineage of Escherichia coli K-12.</title>
        <authorList>
            <person name="Ferenci T."/>
            <person name="Zhou Z."/>
            <person name="Betteridge T."/>
            <person name="Ren Y."/>
            <person name="Liu Y."/>
            <person name="Feng L."/>
            <person name="Reeves P.R."/>
            <person name="Wang L."/>
        </authorList>
    </citation>
    <scope>NUCLEOTIDE SEQUENCE [LARGE SCALE GENOMIC DNA]</scope>
    <source>
        <strain>K12 / MC4100 / BW2952</strain>
    </source>
</reference>
<feature type="chain" id="PRO_1000212850" description="Anaerobic glycerol-3-phosphate dehydrogenase subunit B">
    <location>
        <begin position="1"/>
        <end position="419"/>
    </location>
</feature>
<name>GLPB_ECOBW</name>